<dbReference type="EMBL" id="AJ222806">
    <property type="protein sequence ID" value="CAA11000.1"/>
    <property type="molecule type" value="mRNA"/>
</dbReference>
<dbReference type="RefSeq" id="NP_001037059.1">
    <property type="nucleotide sequence ID" value="NM_001043594.1"/>
</dbReference>
<dbReference type="SMR" id="O45211"/>
<dbReference type="FunCoup" id="O45211">
    <property type="interactions" value="1805"/>
</dbReference>
<dbReference type="STRING" id="7091.O45211"/>
<dbReference type="PaxDb" id="7091-BGIBMGA010619-TA"/>
<dbReference type="EnsemblMetazoa" id="NM_001043594.1">
    <property type="protein sequence ID" value="NP_001037059.1"/>
    <property type="gene ID" value="GeneID_692612"/>
</dbReference>
<dbReference type="GeneID" id="692612"/>
<dbReference type="KEGG" id="bmor:692612"/>
<dbReference type="CTD" id="6908"/>
<dbReference type="eggNOG" id="KOG3302">
    <property type="taxonomic scope" value="Eukaryota"/>
</dbReference>
<dbReference type="HOGENOM" id="CLU_060161_1_3_1"/>
<dbReference type="InParanoid" id="O45211"/>
<dbReference type="OMA" id="HMMPMSE"/>
<dbReference type="OrthoDB" id="519431at7088"/>
<dbReference type="Proteomes" id="UP000005204">
    <property type="component" value="Unassembled WGS sequence"/>
</dbReference>
<dbReference type="GO" id="GO:0005634">
    <property type="term" value="C:nucleus"/>
    <property type="evidence" value="ECO:0000250"/>
    <property type="project" value="UniProtKB"/>
</dbReference>
<dbReference type="GO" id="GO:0005669">
    <property type="term" value="C:transcription factor TFIID complex"/>
    <property type="evidence" value="ECO:0000250"/>
    <property type="project" value="UniProtKB"/>
</dbReference>
<dbReference type="GO" id="GO:0003677">
    <property type="term" value="F:DNA binding"/>
    <property type="evidence" value="ECO:0007669"/>
    <property type="project" value="UniProtKB-KW"/>
</dbReference>
<dbReference type="GO" id="GO:0000995">
    <property type="term" value="F:RNA polymerase III general transcription initiation factor activity"/>
    <property type="evidence" value="ECO:0000250"/>
    <property type="project" value="UniProtKB"/>
</dbReference>
<dbReference type="GO" id="GO:0006352">
    <property type="term" value="P:DNA-templated transcription initiation"/>
    <property type="evidence" value="ECO:0007669"/>
    <property type="project" value="InterPro"/>
</dbReference>
<dbReference type="GO" id="GO:0006366">
    <property type="term" value="P:transcription by RNA polymerase II"/>
    <property type="evidence" value="ECO:0000250"/>
    <property type="project" value="UniProtKB"/>
</dbReference>
<dbReference type="GO" id="GO:0006383">
    <property type="term" value="P:transcription by RNA polymerase III"/>
    <property type="evidence" value="ECO:0000250"/>
    <property type="project" value="UniProtKB"/>
</dbReference>
<dbReference type="CDD" id="cd04516">
    <property type="entry name" value="TBP_eukaryotes"/>
    <property type="match status" value="1"/>
</dbReference>
<dbReference type="FunFam" id="3.30.310.10:FF:000001">
    <property type="entry name" value="TATA-box-binding protein 2"/>
    <property type="match status" value="1"/>
</dbReference>
<dbReference type="FunFam" id="3.30.310.10:FF:000002">
    <property type="entry name" value="TATA-box-binding protein 2"/>
    <property type="match status" value="1"/>
</dbReference>
<dbReference type="Gene3D" id="3.30.310.10">
    <property type="entry name" value="TATA-Binding Protein"/>
    <property type="match status" value="2"/>
</dbReference>
<dbReference type="HAMAP" id="MF_00408">
    <property type="entry name" value="TATA_bind_prot_arch"/>
    <property type="match status" value="1"/>
</dbReference>
<dbReference type="InterPro" id="IPR000814">
    <property type="entry name" value="TBP"/>
</dbReference>
<dbReference type="InterPro" id="IPR030491">
    <property type="entry name" value="TBP_CS"/>
</dbReference>
<dbReference type="InterPro" id="IPR012295">
    <property type="entry name" value="TBP_dom_sf"/>
</dbReference>
<dbReference type="InterPro" id="IPR033710">
    <property type="entry name" value="TBP_eukaryotic"/>
</dbReference>
<dbReference type="PANTHER" id="PTHR10126">
    <property type="entry name" value="TATA-BOX BINDING PROTEIN"/>
    <property type="match status" value="1"/>
</dbReference>
<dbReference type="Pfam" id="PF00352">
    <property type="entry name" value="TBP"/>
    <property type="match status" value="2"/>
</dbReference>
<dbReference type="PRINTS" id="PR00686">
    <property type="entry name" value="TIFACTORIID"/>
</dbReference>
<dbReference type="SUPFAM" id="SSF55945">
    <property type="entry name" value="TATA-box binding protein-like"/>
    <property type="match status" value="2"/>
</dbReference>
<dbReference type="PROSITE" id="PS00351">
    <property type="entry name" value="TFIID"/>
    <property type="match status" value="2"/>
</dbReference>
<comment type="function">
    <text>General transcription factor that functions at the core of the DNA-binding multiprotein factor TFIID. Binding of TFIID to the TATA box is the initial transcriptional step of the pre-initiation complex (PIC), playing a role in the activation of eukaryotic genes transcribed by RNA polymerase II.</text>
</comment>
<comment type="subunit">
    <text>Belongs to the TFIID complex together with the TBP-associated factors (TAFs). Binds DNA as monomer.</text>
</comment>
<comment type="subcellular location">
    <subcellularLocation>
        <location evidence="1">Nucleus</location>
    </subcellularLocation>
</comment>
<comment type="similarity">
    <text evidence="3">Belongs to the TBP family.</text>
</comment>
<name>TBP_BOMMO</name>
<reference key="1">
    <citation type="journal article" date="1998" name="Gene">
        <title>Cloning and characterization of the TATA-binding protein of the silkworm Bombyx mori.</title>
        <authorList>
            <person name="Ouyang C."/>
            <person name="Sprague K.U."/>
        </authorList>
    </citation>
    <scope>NUCLEOTIDE SEQUENCE [MRNA]</scope>
</reference>
<evidence type="ECO:0000250" key="1">
    <source>
        <dbReference type="UniProtKB" id="P20226"/>
    </source>
</evidence>
<evidence type="ECO:0000256" key="2">
    <source>
        <dbReference type="SAM" id="MobiDB-lite"/>
    </source>
</evidence>
<evidence type="ECO:0000305" key="3"/>
<feature type="chain" id="PRO_0000153963" description="TATA-box-binding protein">
    <location>
        <begin position="1"/>
        <end position="307"/>
    </location>
</feature>
<feature type="repeat" description="1">
    <location>
        <begin position="134"/>
        <end position="210"/>
    </location>
</feature>
<feature type="repeat" description="2">
    <location>
        <begin position="224"/>
        <end position="301"/>
    </location>
</feature>
<feature type="region of interest" description="Disordered" evidence="2">
    <location>
        <begin position="1"/>
        <end position="21"/>
    </location>
</feature>
<protein>
    <recommendedName>
        <fullName>TATA-box-binding protein</fullName>
    </recommendedName>
    <alternativeName>
        <fullName>TATA sequence-binding protein</fullName>
    </alternativeName>
    <alternativeName>
        <fullName>TATA-binding factor</fullName>
    </alternativeName>
    <alternativeName>
        <fullName>TATA-box factor</fullName>
    </alternativeName>
    <alternativeName>
        <fullName>Transcription initiation factor TFIID TBP subunit</fullName>
    </alternativeName>
</protein>
<organism>
    <name type="scientific">Bombyx mori</name>
    <name type="common">Silk moth</name>
    <dbReference type="NCBI Taxonomy" id="7091"/>
    <lineage>
        <taxon>Eukaryota</taxon>
        <taxon>Metazoa</taxon>
        <taxon>Ecdysozoa</taxon>
        <taxon>Arthropoda</taxon>
        <taxon>Hexapoda</taxon>
        <taxon>Insecta</taxon>
        <taxon>Pterygota</taxon>
        <taxon>Neoptera</taxon>
        <taxon>Endopterygota</taxon>
        <taxon>Lepidoptera</taxon>
        <taxon>Glossata</taxon>
        <taxon>Ditrysia</taxon>
        <taxon>Bombycoidea</taxon>
        <taxon>Bombycidae</taxon>
        <taxon>Bombycinae</taxon>
        <taxon>Bombyx</taxon>
    </lineage>
</organism>
<proteinExistence type="evidence at transcript level"/>
<keyword id="KW-0238">DNA-binding</keyword>
<keyword id="KW-0539">Nucleus</keyword>
<keyword id="KW-1185">Reference proteome</keyword>
<keyword id="KW-0677">Repeat</keyword>
<keyword id="KW-0804">Transcription</keyword>
<gene>
    <name type="primary">Tbp</name>
</gene>
<accession>O45211</accession>
<sequence length="307" mass="33989">MDHMLPSPYNIPGIGTPLHQPEEDQQILPNAMQQQQLQQQQSQAQPSLAALGSSPIVGFGAIMGTPQRSMHTYAPTASYATPQQMMQPQTPQNMMSPMIAAGNLSSQQMLSQASPAPMTPLTPLSADPGILPQLQNIVSTVNLDCKLDLKKIALHARNAEYNPKRFAAVIMRIREPRTTALIFSSGKMVCTGAKSEEDSRLAARKYARIIQKLGFTAKFLDFKIQNMVGSCDVKFPIRLEGLVLTHGQFSSYEPELFPGLIYRMVKPRIVLLIFVSGKVVLTGAKVREEIYEAFDNIYPILKSFKKQ</sequence>